<gene>
    <name evidence="1" type="primary">citD</name>
    <name type="ordered locus">CGSHiEE_03190</name>
</gene>
<reference key="1">
    <citation type="journal article" date="2007" name="Genome Biol.">
        <title>Characterization and modeling of the Haemophilus influenzae core and supragenomes based on the complete genomic sequences of Rd and 12 clinical nontypeable strains.</title>
        <authorList>
            <person name="Hogg J.S."/>
            <person name="Hu F.Z."/>
            <person name="Janto B."/>
            <person name="Boissy R."/>
            <person name="Hayes J."/>
            <person name="Keefe R."/>
            <person name="Post J.C."/>
            <person name="Ehrlich G.D."/>
        </authorList>
    </citation>
    <scope>NUCLEOTIDE SEQUENCE [LARGE SCALE GENOMIC DNA]</scope>
    <source>
        <strain>PittEE</strain>
    </source>
</reference>
<sequence length="95" mass="10244">MKITKVAVAGTLESSDVQVRVQPFDSLDIEINSSVAKQFGEQIEATVREVLAKLGITAAQVIVEDKGALDCVLQARVKTAAMRATDETINWEAVL</sequence>
<organism>
    <name type="scientific">Haemophilus influenzae (strain PittEE)</name>
    <dbReference type="NCBI Taxonomy" id="374930"/>
    <lineage>
        <taxon>Bacteria</taxon>
        <taxon>Pseudomonadati</taxon>
        <taxon>Pseudomonadota</taxon>
        <taxon>Gammaproteobacteria</taxon>
        <taxon>Pasteurellales</taxon>
        <taxon>Pasteurellaceae</taxon>
        <taxon>Haemophilus</taxon>
    </lineage>
</organism>
<accession>A5UBB4</accession>
<keyword id="KW-0963">Cytoplasm</keyword>
<keyword id="KW-0597">Phosphoprotein</keyword>
<comment type="function">
    <text evidence="1">Covalent carrier of the coenzyme of citrate lyase.</text>
</comment>
<comment type="subunit">
    <text evidence="1">Oligomer with a subunit composition of (alpha,beta,gamma)6.</text>
</comment>
<comment type="subcellular location">
    <subcellularLocation>
        <location evidence="1">Cytoplasm</location>
    </subcellularLocation>
</comment>
<comment type="similarity">
    <text evidence="1">Belongs to the CitD family.</text>
</comment>
<name>CITD_HAEIE</name>
<feature type="chain" id="PRO_1000047070" description="Citrate lyase acyl carrier protein">
    <location>
        <begin position="1"/>
        <end position="95"/>
    </location>
</feature>
<feature type="modified residue" description="O-(phosphoribosyl dephospho-coenzyme A)serine" evidence="1">
    <location>
        <position position="14"/>
    </location>
</feature>
<evidence type="ECO:0000255" key="1">
    <source>
        <dbReference type="HAMAP-Rule" id="MF_00805"/>
    </source>
</evidence>
<dbReference type="EMBL" id="CP000671">
    <property type="protein sequence ID" value="ABQ98065.1"/>
    <property type="molecule type" value="Genomic_DNA"/>
</dbReference>
<dbReference type="SMR" id="A5UBB4"/>
<dbReference type="KEGG" id="hip:CGSHiEE_03190"/>
<dbReference type="HOGENOM" id="CLU_158489_0_0_6"/>
<dbReference type="GO" id="GO:0005737">
    <property type="term" value="C:cytoplasm"/>
    <property type="evidence" value="ECO:0007669"/>
    <property type="project" value="UniProtKB-SubCell"/>
</dbReference>
<dbReference type="HAMAP" id="MF_00805">
    <property type="entry name" value="CitD"/>
    <property type="match status" value="1"/>
</dbReference>
<dbReference type="InterPro" id="IPR006495">
    <property type="entry name" value="CitD"/>
</dbReference>
<dbReference type="InterPro" id="IPR023439">
    <property type="entry name" value="Mal_deCO2ase/Cit_lyase_ACP"/>
</dbReference>
<dbReference type="NCBIfam" id="TIGR01608">
    <property type="entry name" value="citD"/>
    <property type="match status" value="1"/>
</dbReference>
<dbReference type="NCBIfam" id="NF009726">
    <property type="entry name" value="PRK13253.1"/>
    <property type="match status" value="1"/>
</dbReference>
<dbReference type="Pfam" id="PF06857">
    <property type="entry name" value="ACP"/>
    <property type="match status" value="1"/>
</dbReference>
<dbReference type="PIRSF" id="PIRSF002736">
    <property type="entry name" value="Citrt_lyas_gamma"/>
    <property type="match status" value="1"/>
</dbReference>
<proteinExistence type="inferred from homology"/>
<protein>
    <recommendedName>
        <fullName evidence="1">Citrate lyase acyl carrier protein</fullName>
    </recommendedName>
    <alternativeName>
        <fullName evidence="1">Citrate lyase gamma chain</fullName>
    </alternativeName>
</protein>